<dbReference type="EMBL" id="M58004">
    <property type="protein sequence ID" value="AAA37329.1"/>
    <property type="molecule type" value="mRNA"/>
</dbReference>
<dbReference type="EMBL" id="AF128188">
    <property type="protein sequence ID" value="AAF22529.1"/>
    <property type="molecule type" value="mRNA"/>
</dbReference>
<dbReference type="EMBL" id="AF128189">
    <property type="protein sequence ID" value="AAF22530.1"/>
    <property type="molecule type" value="mRNA"/>
</dbReference>
<dbReference type="EMBL" id="AF128190">
    <property type="protein sequence ID" value="AAF22531.1"/>
    <property type="molecule type" value="mRNA"/>
</dbReference>
<dbReference type="EMBL" id="AF128191">
    <property type="protein sequence ID" value="AAF22532.1"/>
    <property type="molecule type" value="mRNA"/>
</dbReference>
<dbReference type="EMBL" id="AF128192">
    <property type="protein sequence ID" value="AAF22533.1"/>
    <property type="molecule type" value="mRNA"/>
</dbReference>
<dbReference type="EMBL" id="AB051897">
    <property type="protein sequence ID" value="BAB18729.1"/>
    <property type="molecule type" value="Genomic_DNA"/>
</dbReference>
<dbReference type="EMBL" id="AK002697">
    <property type="protein sequence ID" value="BAB22291.1"/>
    <property type="molecule type" value="mRNA"/>
</dbReference>
<dbReference type="EMBL" id="AK008547">
    <property type="protein sequence ID" value="BAB25734.1"/>
    <property type="molecule type" value="mRNA"/>
</dbReference>
<dbReference type="EMBL" id="AK150336">
    <property type="protein sequence ID" value="BAE29478.1"/>
    <property type="molecule type" value="mRNA"/>
</dbReference>
<dbReference type="EMBL" id="AK154553">
    <property type="protein sequence ID" value="BAE32672.1"/>
    <property type="molecule type" value="mRNA"/>
</dbReference>
<dbReference type="EMBL" id="AL596122">
    <property type="status" value="NOT_ANNOTATED_CDS"/>
    <property type="molecule type" value="Genomic_DNA"/>
</dbReference>
<dbReference type="EMBL" id="BC002073">
    <property type="protein sequence ID" value="AAH02073.1"/>
    <property type="molecule type" value="mRNA"/>
</dbReference>
<dbReference type="CCDS" id="CCDS25171.1"/>
<dbReference type="PIR" id="I49555">
    <property type="entry name" value="I49555"/>
</dbReference>
<dbReference type="RefSeq" id="NP_033165.1">
    <property type="nucleotide sequence ID" value="NM_009139.3"/>
</dbReference>
<dbReference type="SMR" id="P27784"/>
<dbReference type="FunCoup" id="P27784">
    <property type="interactions" value="605"/>
</dbReference>
<dbReference type="STRING" id="10090.ENSMUSP00000019071"/>
<dbReference type="iPTMnet" id="P27784"/>
<dbReference type="PhosphoSitePlus" id="P27784"/>
<dbReference type="PaxDb" id="10090-ENSMUSP00000019071"/>
<dbReference type="PeptideAtlas" id="P27784"/>
<dbReference type="ProteomicsDB" id="265613"/>
<dbReference type="DNASU" id="20305"/>
<dbReference type="Ensembl" id="ENSMUST00000019071.4">
    <property type="protein sequence ID" value="ENSMUSP00000019071.4"/>
    <property type="gene ID" value="ENSMUSG00000018927.4"/>
</dbReference>
<dbReference type="GeneID" id="20305"/>
<dbReference type="KEGG" id="mmu:20305"/>
<dbReference type="UCSC" id="uc007kpm.1">
    <property type="organism name" value="mouse"/>
</dbReference>
<dbReference type="AGR" id="MGI:98263"/>
<dbReference type="CTD" id="20305"/>
<dbReference type="MGI" id="MGI:98263">
    <property type="gene designation" value="Ccl6"/>
</dbReference>
<dbReference type="VEuPathDB" id="HostDB:ENSMUSG00000018927"/>
<dbReference type="eggNOG" id="ENOG502TJX7">
    <property type="taxonomic scope" value="Eukaryota"/>
</dbReference>
<dbReference type="GeneTree" id="ENSGT01100000263482"/>
<dbReference type="HOGENOM" id="CLU_141716_4_1_1"/>
<dbReference type="InParanoid" id="P27784"/>
<dbReference type="OMA" id="FHHPSDC"/>
<dbReference type="OrthoDB" id="9447832at2759"/>
<dbReference type="PhylomeDB" id="P27784"/>
<dbReference type="TreeFam" id="TF334888"/>
<dbReference type="Reactome" id="R-MMU-416476">
    <property type="pathway name" value="G alpha (q) signalling events"/>
</dbReference>
<dbReference type="Reactome" id="R-MMU-418594">
    <property type="pathway name" value="G alpha (i) signalling events"/>
</dbReference>
<dbReference type="Reactome" id="R-MMU-444473">
    <property type="pathway name" value="Formyl peptide receptors bind formyl peptides and many other ligands"/>
</dbReference>
<dbReference type="BioGRID-ORCS" id="20305">
    <property type="hits" value="0 hits in 77 CRISPR screens"/>
</dbReference>
<dbReference type="PRO" id="PR:P27784"/>
<dbReference type="Proteomes" id="UP000000589">
    <property type="component" value="Chromosome 11"/>
</dbReference>
<dbReference type="RNAct" id="P27784">
    <property type="molecule type" value="protein"/>
</dbReference>
<dbReference type="Bgee" id="ENSMUSG00000018927">
    <property type="expression patterns" value="Expressed in granulocyte and 158 other cell types or tissues"/>
</dbReference>
<dbReference type="GO" id="GO:0005615">
    <property type="term" value="C:extracellular space"/>
    <property type="evidence" value="ECO:0007669"/>
    <property type="project" value="UniProtKB-KW"/>
</dbReference>
<dbReference type="GO" id="GO:0008009">
    <property type="term" value="F:chemokine activity"/>
    <property type="evidence" value="ECO:0007669"/>
    <property type="project" value="InterPro"/>
</dbReference>
<dbReference type="GO" id="GO:0006955">
    <property type="term" value="P:immune response"/>
    <property type="evidence" value="ECO:0007669"/>
    <property type="project" value="InterPro"/>
</dbReference>
<dbReference type="CDD" id="cd00272">
    <property type="entry name" value="Chemokine_CC"/>
    <property type="match status" value="1"/>
</dbReference>
<dbReference type="FunFam" id="2.40.50.40:FF:000002">
    <property type="entry name" value="C-C motif chemokine"/>
    <property type="match status" value="1"/>
</dbReference>
<dbReference type="Gene3D" id="2.40.50.40">
    <property type="match status" value="1"/>
</dbReference>
<dbReference type="InterPro" id="IPR039809">
    <property type="entry name" value="Chemokine_b/g/d"/>
</dbReference>
<dbReference type="InterPro" id="IPR000827">
    <property type="entry name" value="Chemokine_CC_CS"/>
</dbReference>
<dbReference type="InterPro" id="IPR001811">
    <property type="entry name" value="Chemokine_IL8-like_dom"/>
</dbReference>
<dbReference type="InterPro" id="IPR036048">
    <property type="entry name" value="Interleukin_8-like_sf"/>
</dbReference>
<dbReference type="PANTHER" id="PTHR12015:SF87">
    <property type="entry name" value="C-C MOTIF CHEMOKINE 6"/>
    <property type="match status" value="1"/>
</dbReference>
<dbReference type="PANTHER" id="PTHR12015">
    <property type="entry name" value="SMALL INDUCIBLE CYTOKINE A"/>
    <property type="match status" value="1"/>
</dbReference>
<dbReference type="Pfam" id="PF00048">
    <property type="entry name" value="IL8"/>
    <property type="match status" value="1"/>
</dbReference>
<dbReference type="SMART" id="SM00199">
    <property type="entry name" value="SCY"/>
    <property type="match status" value="1"/>
</dbReference>
<dbReference type="SUPFAM" id="SSF54117">
    <property type="entry name" value="Interleukin 8-like chemokines"/>
    <property type="match status" value="1"/>
</dbReference>
<dbReference type="PROSITE" id="PS00472">
    <property type="entry name" value="SMALL_CYTOKINES_CC"/>
    <property type="match status" value="1"/>
</dbReference>
<sequence>MRNSKTAISFFILVAVLGSQAGLIQEMEKEDRRYNPPIIHQGFQDTSSDCCFSYATQIPCKRFIYYFPTSGGCIKPGIIFISRRGTQVCADPSDRRVQRCLSTLKQGPRSGNKVIA</sequence>
<proteinExistence type="evidence at protein level"/>
<evidence type="ECO:0000250" key="1">
    <source>
        <dbReference type="UniProtKB" id="P51670"/>
    </source>
</evidence>
<evidence type="ECO:0000255" key="2"/>
<evidence type="ECO:0000269" key="3">
    <source>
    </source>
</evidence>
<evidence type="ECO:0000269" key="4">
    <source>
    </source>
</evidence>
<evidence type="ECO:0000269" key="5">
    <source>
    </source>
</evidence>
<evidence type="ECO:0000269" key="6">
    <source>
    </source>
</evidence>
<evidence type="ECO:0000303" key="7">
    <source>
    </source>
</evidence>
<evidence type="ECO:0000305" key="8"/>
<keyword id="KW-0145">Chemotaxis</keyword>
<keyword id="KW-0202">Cytokine</keyword>
<keyword id="KW-1015">Disulfide bond</keyword>
<keyword id="KW-1185">Reference proteome</keyword>
<keyword id="KW-0964">Secreted</keyword>
<keyword id="KW-0732">Signal</keyword>
<comment type="function">
    <text evidence="3 4 6">Chemotactic factor that attracts mostly macrophage, but it can also attract B cells, CD4(+) lymphocytes and eosinophils.</text>
</comment>
<comment type="subcellular location">
    <subcellularLocation>
        <location>Secreted</location>
    </subcellularLocation>
</comment>
<comment type="tissue specificity">
    <text evidence="5">Expressed in myelopoietic bone marrow cultures stimulated by GM-CSF.</text>
</comment>
<comment type="induction">
    <text evidence="5">Associated with stimuli that promote myeloid differentiation.</text>
</comment>
<comment type="PTM">
    <text evidence="4">The N-terminal is proteolytically cleaved by proteases associated with inflammatory responses. The processed forms CL6(22-95) and CCL6(23-95) show increase in CCR1-mediated signaling and chemotaxis assays in vitro.</text>
</comment>
<comment type="similarity">
    <text evidence="8">Belongs to the intercrine beta (chemokine CC) family.</text>
</comment>
<organism>
    <name type="scientific">Mus musculus</name>
    <name type="common">Mouse</name>
    <dbReference type="NCBI Taxonomy" id="10090"/>
    <lineage>
        <taxon>Eukaryota</taxon>
        <taxon>Metazoa</taxon>
        <taxon>Chordata</taxon>
        <taxon>Craniata</taxon>
        <taxon>Vertebrata</taxon>
        <taxon>Euteleostomi</taxon>
        <taxon>Mammalia</taxon>
        <taxon>Eutheria</taxon>
        <taxon>Euarchontoglires</taxon>
        <taxon>Glires</taxon>
        <taxon>Rodentia</taxon>
        <taxon>Myomorpha</taxon>
        <taxon>Muroidea</taxon>
        <taxon>Muridae</taxon>
        <taxon>Murinae</taxon>
        <taxon>Mus</taxon>
        <taxon>Mus</taxon>
    </lineage>
</organism>
<protein>
    <recommendedName>
        <fullName>C-C motif chemokine 6</fullName>
    </recommendedName>
    <alternativeName>
        <fullName evidence="7">Protein C10</fullName>
    </alternativeName>
    <alternativeName>
        <fullName>Small-inducible cytokine A6</fullName>
    </alternativeName>
    <component>
        <recommendedName>
            <fullName>CCL6(22-95)</fullName>
        </recommendedName>
    </component>
    <component>
        <recommendedName>
            <fullName>CCL6(23-95)</fullName>
        </recommendedName>
    </component>
</protein>
<feature type="signal peptide" evidence="2">
    <location>
        <begin position="1"/>
        <end position="21"/>
    </location>
</feature>
<feature type="chain" id="PRO_0000005182" description="C-C motif chemokine 6">
    <location>
        <begin position="22"/>
        <end position="116"/>
    </location>
</feature>
<feature type="chain" id="PRO_0000041844" description="CCL6(22-95)" evidence="4">
    <location>
        <begin position="43"/>
        <end position="116"/>
    </location>
</feature>
<feature type="chain" id="PRO_0000041845" description="CCL6(23-95)" evidence="4">
    <location>
        <begin position="44"/>
        <end position="116"/>
    </location>
</feature>
<feature type="disulfide bond" evidence="1">
    <location>
        <begin position="50"/>
        <end position="73"/>
    </location>
</feature>
<feature type="disulfide bond" evidence="1">
    <location>
        <begin position="51"/>
        <end position="89"/>
    </location>
</feature>
<feature type="disulfide bond" evidence="1">
    <location>
        <begin position="60"/>
        <end position="100"/>
    </location>
</feature>
<feature type="sequence conflict" description="In Ref. 8; AAH02073." evidence="8" ref="8">
    <original>F</original>
    <variation>V</variation>
    <location>
        <position position="43"/>
    </location>
</feature>
<feature type="sequence conflict" description="In Ref. 6; BAB25734." evidence="8" ref="6">
    <original>S</original>
    <variation>R</variation>
    <location>
        <position position="93"/>
    </location>
</feature>
<feature type="sequence conflict" description="In Ref. 8; AAH02073." evidence="8" ref="8">
    <original>G</original>
    <variation>R</variation>
    <location>
        <position position="111"/>
    </location>
</feature>
<accession>P27784</accession>
<accession>Q3U3W3</accession>
<accession>Q5QNW1</accession>
<accession>Q99M24</accession>
<accession>Q9D830</accession>
<name>CCL6_MOUSE</name>
<gene>
    <name type="primary">Ccl6</name>
    <name evidence="7" type="synonym">C10</name>
    <name type="synonym">Scya6</name>
</gene>
<reference key="1">
    <citation type="journal article" date="1991" name="Cell Regul.">
        <title>Novel expression pattern of a new member of the MIP-1 family of cytokine-like genes.</title>
        <authorList>
            <person name="Orlofsky A."/>
            <person name="Berger M.S."/>
            <person name="Prystowsky M.B."/>
        </authorList>
    </citation>
    <scope>NUCLEOTIDE SEQUENCE [MRNA]</scope>
    <scope>TISSUE SPECIFICITY</scope>
    <scope>INDUCTION</scope>
    <source>
        <strain>CBA/J</strain>
        <tissue>Bone marrow</tissue>
    </source>
</reference>
<reference key="2">
    <citation type="journal article" date="1994" name="J. Immunol.">
        <title>Selective induction of the beta chemokine C10 by IL-4 in mouse macrophages.</title>
        <authorList>
            <person name="Orlofsky A."/>
            <person name="Lin E.Y."/>
            <person name="Prystowsky M.B."/>
        </authorList>
    </citation>
    <scope>FUNCTION</scope>
</reference>
<reference key="3">
    <citation type="journal article" date="1999" name="Am. J. Pathol.">
        <title>C10 is a novel chemokine expressed in experimental inflammatory demyelinating disorders that promotes recruitment of macrophages to the central nervous system.</title>
        <authorList>
            <person name="Asensio V.C."/>
            <person name="Lassmann S."/>
            <person name="Pagenstecher A."/>
            <person name="Steffensen S.C."/>
            <person name="Henriksen S.J."/>
            <person name="Campbell I.L."/>
        </authorList>
    </citation>
    <scope>FUNCTION</scope>
</reference>
<reference key="4">
    <citation type="journal article" date="1999" name="J. Immunol.">
        <title>Sequence polymorphisms in the chemokines Scya1 (TCA-3), Scya2 (monocyte chemoattractant protein (MCP)-1), and Scya12 (MCP-5) are candidates for eae7, a locus controlling susceptibility to monophasic remitting/nonrelapsing experimental allergic encephalomyelitis.</title>
        <authorList>
            <person name="Teuscher C."/>
            <person name="Butterfield R.J."/>
            <person name="Ma R.Z."/>
            <person name="Zachary J.F."/>
            <person name="Doerge R.W."/>
            <person name="Blankenhorn E.P."/>
        </authorList>
    </citation>
    <scope>NUCLEOTIDE SEQUENCE [MRNA]</scope>
    <source>
        <strain>B10.S/J</strain>
        <strain>BALB/cJ</strain>
        <strain>DBA/2J</strain>
        <strain>NOD/LtJ</strain>
        <strain>SJL/J</strain>
        <tissue>Spleen</tissue>
    </source>
</reference>
<reference key="5">
    <citation type="submission" date="2000-11" db="EMBL/GenBank/DDBJ databases">
        <title>Organization of the mouse CC chemokine cluster containing the genes for C10, MRP-2 and RANTES.</title>
        <authorList>
            <person name="Nomiyama H."/>
        </authorList>
    </citation>
    <scope>NUCLEOTIDE SEQUENCE [MRNA]</scope>
    <source>
        <strain>129/Sv</strain>
    </source>
</reference>
<reference key="6">
    <citation type="journal article" date="2005" name="Science">
        <title>The transcriptional landscape of the mammalian genome.</title>
        <authorList>
            <person name="Carninci P."/>
            <person name="Kasukawa T."/>
            <person name="Katayama S."/>
            <person name="Gough J."/>
            <person name="Frith M.C."/>
            <person name="Maeda N."/>
            <person name="Oyama R."/>
            <person name="Ravasi T."/>
            <person name="Lenhard B."/>
            <person name="Wells C."/>
            <person name="Kodzius R."/>
            <person name="Shimokawa K."/>
            <person name="Bajic V.B."/>
            <person name="Brenner S.E."/>
            <person name="Batalov S."/>
            <person name="Forrest A.R."/>
            <person name="Zavolan M."/>
            <person name="Davis M.J."/>
            <person name="Wilming L.G."/>
            <person name="Aidinis V."/>
            <person name="Allen J.E."/>
            <person name="Ambesi-Impiombato A."/>
            <person name="Apweiler R."/>
            <person name="Aturaliya R.N."/>
            <person name="Bailey T.L."/>
            <person name="Bansal M."/>
            <person name="Baxter L."/>
            <person name="Beisel K.W."/>
            <person name="Bersano T."/>
            <person name="Bono H."/>
            <person name="Chalk A.M."/>
            <person name="Chiu K.P."/>
            <person name="Choudhary V."/>
            <person name="Christoffels A."/>
            <person name="Clutterbuck D.R."/>
            <person name="Crowe M.L."/>
            <person name="Dalla E."/>
            <person name="Dalrymple B.P."/>
            <person name="de Bono B."/>
            <person name="Della Gatta G."/>
            <person name="di Bernardo D."/>
            <person name="Down T."/>
            <person name="Engstrom P."/>
            <person name="Fagiolini M."/>
            <person name="Faulkner G."/>
            <person name="Fletcher C.F."/>
            <person name="Fukushima T."/>
            <person name="Furuno M."/>
            <person name="Futaki S."/>
            <person name="Gariboldi M."/>
            <person name="Georgii-Hemming P."/>
            <person name="Gingeras T.R."/>
            <person name="Gojobori T."/>
            <person name="Green R.E."/>
            <person name="Gustincich S."/>
            <person name="Harbers M."/>
            <person name="Hayashi Y."/>
            <person name="Hensch T.K."/>
            <person name="Hirokawa N."/>
            <person name="Hill D."/>
            <person name="Huminiecki L."/>
            <person name="Iacono M."/>
            <person name="Ikeo K."/>
            <person name="Iwama A."/>
            <person name="Ishikawa T."/>
            <person name="Jakt M."/>
            <person name="Kanapin A."/>
            <person name="Katoh M."/>
            <person name="Kawasawa Y."/>
            <person name="Kelso J."/>
            <person name="Kitamura H."/>
            <person name="Kitano H."/>
            <person name="Kollias G."/>
            <person name="Krishnan S.P."/>
            <person name="Kruger A."/>
            <person name="Kummerfeld S.K."/>
            <person name="Kurochkin I.V."/>
            <person name="Lareau L.F."/>
            <person name="Lazarevic D."/>
            <person name="Lipovich L."/>
            <person name="Liu J."/>
            <person name="Liuni S."/>
            <person name="McWilliam S."/>
            <person name="Madan Babu M."/>
            <person name="Madera M."/>
            <person name="Marchionni L."/>
            <person name="Matsuda H."/>
            <person name="Matsuzawa S."/>
            <person name="Miki H."/>
            <person name="Mignone F."/>
            <person name="Miyake S."/>
            <person name="Morris K."/>
            <person name="Mottagui-Tabar S."/>
            <person name="Mulder N."/>
            <person name="Nakano N."/>
            <person name="Nakauchi H."/>
            <person name="Ng P."/>
            <person name="Nilsson R."/>
            <person name="Nishiguchi S."/>
            <person name="Nishikawa S."/>
            <person name="Nori F."/>
            <person name="Ohara O."/>
            <person name="Okazaki Y."/>
            <person name="Orlando V."/>
            <person name="Pang K.C."/>
            <person name="Pavan W.J."/>
            <person name="Pavesi G."/>
            <person name="Pesole G."/>
            <person name="Petrovsky N."/>
            <person name="Piazza S."/>
            <person name="Reed J."/>
            <person name="Reid J.F."/>
            <person name="Ring B.Z."/>
            <person name="Ringwald M."/>
            <person name="Rost B."/>
            <person name="Ruan Y."/>
            <person name="Salzberg S.L."/>
            <person name="Sandelin A."/>
            <person name="Schneider C."/>
            <person name="Schoenbach C."/>
            <person name="Sekiguchi K."/>
            <person name="Semple C.A."/>
            <person name="Seno S."/>
            <person name="Sessa L."/>
            <person name="Sheng Y."/>
            <person name="Shibata Y."/>
            <person name="Shimada H."/>
            <person name="Shimada K."/>
            <person name="Silva D."/>
            <person name="Sinclair B."/>
            <person name="Sperling S."/>
            <person name="Stupka E."/>
            <person name="Sugiura K."/>
            <person name="Sultana R."/>
            <person name="Takenaka Y."/>
            <person name="Taki K."/>
            <person name="Tammoja K."/>
            <person name="Tan S.L."/>
            <person name="Tang S."/>
            <person name="Taylor M.S."/>
            <person name="Tegner J."/>
            <person name="Teichmann S.A."/>
            <person name="Ueda H.R."/>
            <person name="van Nimwegen E."/>
            <person name="Verardo R."/>
            <person name="Wei C.L."/>
            <person name="Yagi K."/>
            <person name="Yamanishi H."/>
            <person name="Zabarovsky E."/>
            <person name="Zhu S."/>
            <person name="Zimmer A."/>
            <person name="Hide W."/>
            <person name="Bult C."/>
            <person name="Grimmond S.M."/>
            <person name="Teasdale R.D."/>
            <person name="Liu E.T."/>
            <person name="Brusic V."/>
            <person name="Quackenbush J."/>
            <person name="Wahlestedt C."/>
            <person name="Mattick J.S."/>
            <person name="Hume D.A."/>
            <person name="Kai C."/>
            <person name="Sasaki D."/>
            <person name="Tomaru Y."/>
            <person name="Fukuda S."/>
            <person name="Kanamori-Katayama M."/>
            <person name="Suzuki M."/>
            <person name="Aoki J."/>
            <person name="Arakawa T."/>
            <person name="Iida J."/>
            <person name="Imamura K."/>
            <person name="Itoh M."/>
            <person name="Kato T."/>
            <person name="Kawaji H."/>
            <person name="Kawagashira N."/>
            <person name="Kawashima T."/>
            <person name="Kojima M."/>
            <person name="Kondo S."/>
            <person name="Konno H."/>
            <person name="Nakano K."/>
            <person name="Ninomiya N."/>
            <person name="Nishio T."/>
            <person name="Okada M."/>
            <person name="Plessy C."/>
            <person name="Shibata K."/>
            <person name="Shiraki T."/>
            <person name="Suzuki S."/>
            <person name="Tagami M."/>
            <person name="Waki K."/>
            <person name="Watahiki A."/>
            <person name="Okamura-Oho Y."/>
            <person name="Suzuki H."/>
            <person name="Kawai J."/>
            <person name="Hayashizaki Y."/>
        </authorList>
    </citation>
    <scope>NUCLEOTIDE SEQUENCE [LARGE SCALE MRNA]</scope>
    <source>
        <strain>C57BL/6J</strain>
        <strain>NOD</strain>
        <tissue>Bone marrow</tissue>
        <tissue>Pancreas</tissue>
    </source>
</reference>
<reference key="7">
    <citation type="journal article" date="2009" name="PLoS Biol.">
        <title>Lineage-specific biology revealed by a finished genome assembly of the mouse.</title>
        <authorList>
            <person name="Church D.M."/>
            <person name="Goodstadt L."/>
            <person name="Hillier L.W."/>
            <person name="Zody M.C."/>
            <person name="Goldstein S."/>
            <person name="She X."/>
            <person name="Bult C.J."/>
            <person name="Agarwala R."/>
            <person name="Cherry J.L."/>
            <person name="DiCuccio M."/>
            <person name="Hlavina W."/>
            <person name="Kapustin Y."/>
            <person name="Meric P."/>
            <person name="Maglott D."/>
            <person name="Birtle Z."/>
            <person name="Marques A.C."/>
            <person name="Graves T."/>
            <person name="Zhou S."/>
            <person name="Teague B."/>
            <person name="Potamousis K."/>
            <person name="Churas C."/>
            <person name="Place M."/>
            <person name="Herschleb J."/>
            <person name="Runnheim R."/>
            <person name="Forrest D."/>
            <person name="Amos-Landgraf J."/>
            <person name="Schwartz D.C."/>
            <person name="Cheng Z."/>
            <person name="Lindblad-Toh K."/>
            <person name="Eichler E.E."/>
            <person name="Ponting C.P."/>
        </authorList>
    </citation>
    <scope>NUCLEOTIDE SEQUENCE [LARGE SCALE GENOMIC DNA]</scope>
    <source>
        <strain>C57BL/6J</strain>
    </source>
</reference>
<reference key="8">
    <citation type="journal article" date="2004" name="Genome Res.">
        <title>The status, quality, and expansion of the NIH full-length cDNA project: the Mammalian Gene Collection (MGC).</title>
        <authorList>
            <consortium name="The MGC Project Team"/>
        </authorList>
    </citation>
    <scope>NUCLEOTIDE SEQUENCE [LARGE SCALE MRNA]</scope>
    <source>
        <tissue>Mammary gland</tissue>
    </source>
</reference>
<reference key="9">
    <citation type="journal article" date="2005" name="J. Immunol.">
        <title>Proteolytic activation of alternative CCR1 ligands in inflammation.</title>
        <authorList>
            <person name="Berahovich R.D."/>
            <person name="Miao Z."/>
            <person name="Wang Y."/>
            <person name="Premack B."/>
            <person name="Howard M.C."/>
            <person name="Schall T.J."/>
        </authorList>
    </citation>
    <scope>IDENTIFICATION OF CCL6(22-95) AND CCL6(23-95)</scope>
    <scope>PROTEOLYTIC PROCESSING OF N-TERMINAL</scope>
    <scope>FUNCTION</scope>
</reference>